<sequence>MNGSRAWRLAAWLLLCLSCSAAVARKDSCETCTKLVERFHKGLENTAKKNFGGGNTAWEEKTLSKYESSEIRLVEIIENICDSSDFECNHMVEEHEEQIEKWWFKMKQKYPDLLKWFCIEAIKVCCPSGSYGPDCLACLGGSERPCHGNGFCSGDGTRSGDGSCRCKAEYTGSFCLECSDGYYSSERNDTHAVCIACNQACKTCNGPSNEDCKECNNGWVKDDGKCVDLNECASEESPCKDSQYCLNTEGSFLCKECDGSCSGCSGEGPESCKDCATGFVMLSGKCTDVDECDASEKLCLRENEVCLNTAGSYKCTCSEGFEDKEGNCVKIMETENPEITEGETGTPASDTNILNTAHEDL</sequence>
<dbReference type="EMBL" id="BC097826">
    <property type="protein sequence ID" value="AAH97826.1"/>
    <property type="molecule type" value="mRNA"/>
</dbReference>
<dbReference type="RefSeq" id="NP_001089538.1">
    <property type="nucleotide sequence ID" value="NM_001096069.1"/>
</dbReference>
<dbReference type="GlyCosmos" id="Q4V7M2">
    <property type="glycosylation" value="1 site, No reported glycans"/>
</dbReference>
<dbReference type="DNASU" id="734593"/>
<dbReference type="GeneID" id="734593"/>
<dbReference type="KEGG" id="xla:734593"/>
<dbReference type="AGR" id="Xenbase:XB-GENE-6255881"/>
<dbReference type="CTD" id="734593"/>
<dbReference type="Xenbase" id="XB-GENE-6255881">
    <property type="gene designation" value="creld2.L"/>
</dbReference>
<dbReference type="OMA" id="TGHFLIM"/>
<dbReference type="OrthoDB" id="19039at2759"/>
<dbReference type="Proteomes" id="UP000186698">
    <property type="component" value="Chromosome 3L"/>
</dbReference>
<dbReference type="Bgee" id="734593">
    <property type="expression patterns" value="Expressed in egg cell and 19 other cell types or tissues"/>
</dbReference>
<dbReference type="GO" id="GO:0005783">
    <property type="term" value="C:endoplasmic reticulum"/>
    <property type="evidence" value="ECO:0007669"/>
    <property type="project" value="UniProtKB-SubCell"/>
</dbReference>
<dbReference type="GO" id="GO:0005576">
    <property type="term" value="C:extracellular region"/>
    <property type="evidence" value="ECO:0007669"/>
    <property type="project" value="UniProtKB-SubCell"/>
</dbReference>
<dbReference type="GO" id="GO:0005509">
    <property type="term" value="F:calcium ion binding"/>
    <property type="evidence" value="ECO:0007669"/>
    <property type="project" value="InterPro"/>
</dbReference>
<dbReference type="CDD" id="cd00064">
    <property type="entry name" value="FU"/>
    <property type="match status" value="2"/>
</dbReference>
<dbReference type="FunFam" id="2.10.25.10:FF:000038">
    <property type="entry name" value="Fibrillin 2"/>
    <property type="match status" value="1"/>
</dbReference>
<dbReference type="Gene3D" id="2.10.220.10">
    <property type="entry name" value="Hormone Receptor, Insulin-like Growth Factor Receptor 1, Chain A, domain 2"/>
    <property type="match status" value="1"/>
</dbReference>
<dbReference type="Gene3D" id="2.10.25.10">
    <property type="entry name" value="Laminin"/>
    <property type="match status" value="1"/>
</dbReference>
<dbReference type="InterPro" id="IPR021852">
    <property type="entry name" value="DUF3456"/>
</dbReference>
<dbReference type="InterPro" id="IPR001881">
    <property type="entry name" value="EGF-like_Ca-bd_dom"/>
</dbReference>
<dbReference type="InterPro" id="IPR000742">
    <property type="entry name" value="EGF-like_dom"/>
</dbReference>
<dbReference type="InterPro" id="IPR000152">
    <property type="entry name" value="EGF-type_Asp/Asn_hydroxyl_site"/>
</dbReference>
<dbReference type="InterPro" id="IPR018097">
    <property type="entry name" value="EGF_Ca-bd_CS"/>
</dbReference>
<dbReference type="InterPro" id="IPR006212">
    <property type="entry name" value="Furin_repeat"/>
</dbReference>
<dbReference type="InterPro" id="IPR009030">
    <property type="entry name" value="Growth_fac_rcpt_cys_sf"/>
</dbReference>
<dbReference type="InterPro" id="IPR002049">
    <property type="entry name" value="LE_dom"/>
</dbReference>
<dbReference type="InterPro" id="IPR049883">
    <property type="entry name" value="NOTCH1_EGF-like"/>
</dbReference>
<dbReference type="PANTHER" id="PTHR24039:SF28">
    <property type="entry name" value="EGF-LIKE DOMAIN-CONTAINING PROTEIN"/>
    <property type="match status" value="1"/>
</dbReference>
<dbReference type="PANTHER" id="PTHR24039">
    <property type="entry name" value="FIBRILLIN-RELATED"/>
    <property type="match status" value="1"/>
</dbReference>
<dbReference type="Pfam" id="PF11938">
    <property type="entry name" value="DUF3456"/>
    <property type="match status" value="2"/>
</dbReference>
<dbReference type="Pfam" id="PF07645">
    <property type="entry name" value="EGF_CA"/>
    <property type="match status" value="2"/>
</dbReference>
<dbReference type="SMART" id="SM00181">
    <property type="entry name" value="EGF"/>
    <property type="match status" value="3"/>
</dbReference>
<dbReference type="SMART" id="SM00179">
    <property type="entry name" value="EGF_CA"/>
    <property type="match status" value="2"/>
</dbReference>
<dbReference type="SMART" id="SM00261">
    <property type="entry name" value="FU"/>
    <property type="match status" value="2"/>
</dbReference>
<dbReference type="SUPFAM" id="SSF57184">
    <property type="entry name" value="Growth factor receptor domain"/>
    <property type="match status" value="1"/>
</dbReference>
<dbReference type="PROSITE" id="PS00010">
    <property type="entry name" value="ASX_HYDROXYL"/>
    <property type="match status" value="1"/>
</dbReference>
<dbReference type="PROSITE" id="PS00022">
    <property type="entry name" value="EGF_1"/>
    <property type="match status" value="1"/>
</dbReference>
<dbReference type="PROSITE" id="PS01186">
    <property type="entry name" value="EGF_2"/>
    <property type="match status" value="1"/>
</dbReference>
<dbReference type="PROSITE" id="PS50026">
    <property type="entry name" value="EGF_3"/>
    <property type="match status" value="2"/>
</dbReference>
<dbReference type="PROSITE" id="PS01187">
    <property type="entry name" value="EGF_CA"/>
    <property type="match status" value="2"/>
</dbReference>
<reference key="1">
    <citation type="submission" date="2005-06" db="EMBL/GenBank/DDBJ databases">
        <authorList>
            <consortium name="NIH - Xenopus Gene Collection (XGC) project"/>
        </authorList>
    </citation>
    <scope>NUCLEOTIDE SEQUENCE [LARGE SCALE MRNA]</scope>
    <source>
        <tissue>Egg</tissue>
    </source>
</reference>
<feature type="signal peptide" evidence="2">
    <location>
        <begin position="1"/>
        <end position="24"/>
    </location>
</feature>
<feature type="chain" id="PRO_0000256250" description="Cysteine-rich with EGF-like domain protein 2-B">
    <location>
        <begin position="25"/>
        <end position="361"/>
    </location>
</feature>
<feature type="domain" description="EGF-like 1" evidence="3">
    <location>
        <begin position="134"/>
        <end position="176"/>
    </location>
</feature>
<feature type="repeat" description="FU 1">
    <location>
        <begin position="191"/>
        <end position="238"/>
    </location>
</feature>
<feature type="repeat" description="FU 2">
    <location>
        <begin position="251"/>
        <end position="298"/>
    </location>
</feature>
<feature type="domain" description="EGF-like 2; calcium-binding" evidence="3">
    <location>
        <begin position="288"/>
        <end position="329"/>
    </location>
</feature>
<feature type="region of interest" description="Disordered" evidence="4">
    <location>
        <begin position="339"/>
        <end position="361"/>
    </location>
</feature>
<feature type="compositionally biased region" description="Polar residues" evidence="4">
    <location>
        <begin position="346"/>
        <end position="355"/>
    </location>
</feature>
<feature type="glycosylation site" description="N-linked (GlcNAc...) asparagine" evidence="2">
    <location>
        <position position="188"/>
    </location>
</feature>
<feature type="disulfide bond" evidence="3">
    <location>
        <begin position="138"/>
        <end position="152"/>
    </location>
</feature>
<feature type="disulfide bond" evidence="3">
    <location>
        <begin position="146"/>
        <end position="164"/>
    </location>
</feature>
<feature type="disulfide bond" evidence="3">
    <location>
        <begin position="166"/>
        <end position="175"/>
    </location>
</feature>
<feature type="disulfide bond" evidence="3">
    <location>
        <begin position="292"/>
        <end position="306"/>
    </location>
</feature>
<feature type="disulfide bond" evidence="3">
    <location>
        <begin position="299"/>
        <end position="315"/>
    </location>
</feature>
<feature type="disulfide bond" evidence="3">
    <location>
        <begin position="317"/>
        <end position="328"/>
    </location>
</feature>
<proteinExistence type="evidence at transcript level"/>
<protein>
    <recommendedName>
        <fullName>Cysteine-rich with EGF-like domain protein 2-B</fullName>
    </recommendedName>
</protein>
<keyword id="KW-0106">Calcium</keyword>
<keyword id="KW-1015">Disulfide bond</keyword>
<keyword id="KW-0245">EGF-like domain</keyword>
<keyword id="KW-0256">Endoplasmic reticulum</keyword>
<keyword id="KW-0325">Glycoprotein</keyword>
<keyword id="KW-1185">Reference proteome</keyword>
<keyword id="KW-0677">Repeat</keyword>
<keyword id="KW-0964">Secreted</keyword>
<keyword id="KW-0732">Signal</keyword>
<organism>
    <name type="scientific">Xenopus laevis</name>
    <name type="common">African clawed frog</name>
    <dbReference type="NCBI Taxonomy" id="8355"/>
    <lineage>
        <taxon>Eukaryota</taxon>
        <taxon>Metazoa</taxon>
        <taxon>Chordata</taxon>
        <taxon>Craniata</taxon>
        <taxon>Vertebrata</taxon>
        <taxon>Euteleostomi</taxon>
        <taxon>Amphibia</taxon>
        <taxon>Batrachia</taxon>
        <taxon>Anura</taxon>
        <taxon>Pipoidea</taxon>
        <taxon>Pipidae</taxon>
        <taxon>Xenopodinae</taxon>
        <taxon>Xenopus</taxon>
        <taxon>Xenopus</taxon>
    </lineage>
</organism>
<gene>
    <name type="primary">creld2-b</name>
</gene>
<accession>Q4V7M2</accession>
<name>CRE2B_XENLA</name>
<evidence type="ECO:0000250" key="1"/>
<evidence type="ECO:0000255" key="2"/>
<evidence type="ECO:0000255" key="3">
    <source>
        <dbReference type="PROSITE-ProRule" id="PRU00076"/>
    </source>
</evidence>
<evidence type="ECO:0000256" key="4">
    <source>
        <dbReference type="SAM" id="MobiDB-lite"/>
    </source>
</evidence>
<evidence type="ECO:0000305" key="5"/>
<comment type="function">
    <text evidence="1">Possible role in neuronal acetylcholine receptor transport.</text>
</comment>
<comment type="subcellular location">
    <subcellularLocation>
        <location>Secreted</location>
    </subcellularLocation>
    <subcellularLocation>
        <location evidence="1">Endoplasmic reticulum</location>
    </subcellularLocation>
</comment>
<comment type="similarity">
    <text evidence="5">Belongs to the CRELD family.</text>
</comment>